<keyword id="KW-0007">Acetylation</keyword>
<keyword id="KW-0067">ATP-binding</keyword>
<keyword id="KW-0131">Cell cycle</keyword>
<keyword id="KW-0132">Cell division</keyword>
<keyword id="KW-0963">Cytoplasm</keyword>
<keyword id="KW-0206">Cytoskeleton</keyword>
<keyword id="KW-0547">Nucleotide-binding</keyword>
<keyword id="KW-0539">Nucleus</keyword>
<keyword id="KW-0597">Phosphoprotein</keyword>
<keyword id="KW-0653">Protein transport</keyword>
<keyword id="KW-1185">Reference proteome</keyword>
<keyword id="KW-0677">Repeat</keyword>
<keyword id="KW-0813">Transport</keyword>
<name>CD48E_ARATH</name>
<feature type="initiator methionine" description="Removed" evidence="2">
    <location>
        <position position="1"/>
    </location>
</feature>
<feature type="chain" id="PRO_0000084583" description="Cell division control protein 48 homolog E">
    <location>
        <begin position="2"/>
        <end position="810"/>
    </location>
</feature>
<feature type="binding site" evidence="3">
    <location>
        <begin position="248"/>
        <end position="255"/>
    </location>
    <ligand>
        <name>ATP</name>
        <dbReference type="ChEBI" id="CHEBI:30616"/>
    </ligand>
</feature>
<feature type="binding site" evidence="3">
    <location>
        <begin position="521"/>
        <end position="528"/>
    </location>
    <ligand>
        <name>ATP</name>
        <dbReference type="ChEBI" id="CHEBI:30616"/>
    </ligand>
</feature>
<feature type="modified residue" description="N-acetylserine" evidence="2">
    <location>
        <position position="2"/>
    </location>
</feature>
<feature type="modified residue" description="Phosphoserine" evidence="2">
    <location>
        <position position="41"/>
    </location>
</feature>
<organism>
    <name type="scientific">Arabidopsis thaliana</name>
    <name type="common">Mouse-ear cress</name>
    <dbReference type="NCBI Taxonomy" id="3702"/>
    <lineage>
        <taxon>Eukaryota</taxon>
        <taxon>Viridiplantae</taxon>
        <taxon>Streptophyta</taxon>
        <taxon>Embryophyta</taxon>
        <taxon>Tracheophyta</taxon>
        <taxon>Spermatophyta</taxon>
        <taxon>Magnoliopsida</taxon>
        <taxon>eudicotyledons</taxon>
        <taxon>Gunneridae</taxon>
        <taxon>Pentapetalae</taxon>
        <taxon>rosids</taxon>
        <taxon>malvids</taxon>
        <taxon>Brassicales</taxon>
        <taxon>Brassicaceae</taxon>
        <taxon>Camelineae</taxon>
        <taxon>Arabidopsis</taxon>
    </lineage>
</organism>
<reference key="1">
    <citation type="journal article" date="2000" name="Nature">
        <title>Sequence and analysis of chromosome 5 of the plant Arabidopsis thaliana.</title>
        <authorList>
            <person name="Tabata S."/>
            <person name="Kaneko T."/>
            <person name="Nakamura Y."/>
            <person name="Kotani H."/>
            <person name="Kato T."/>
            <person name="Asamizu E."/>
            <person name="Miyajima N."/>
            <person name="Sasamoto S."/>
            <person name="Kimura T."/>
            <person name="Hosouchi T."/>
            <person name="Kawashima K."/>
            <person name="Kohara M."/>
            <person name="Matsumoto M."/>
            <person name="Matsuno A."/>
            <person name="Muraki A."/>
            <person name="Nakayama S."/>
            <person name="Nakazaki N."/>
            <person name="Naruo K."/>
            <person name="Okumura S."/>
            <person name="Shinpo S."/>
            <person name="Takeuchi C."/>
            <person name="Wada T."/>
            <person name="Watanabe A."/>
            <person name="Yamada M."/>
            <person name="Yasuda M."/>
            <person name="Sato S."/>
            <person name="de la Bastide M."/>
            <person name="Huang E."/>
            <person name="Spiegel L."/>
            <person name="Gnoj L."/>
            <person name="O'Shaughnessy A."/>
            <person name="Preston R."/>
            <person name="Habermann K."/>
            <person name="Murray J."/>
            <person name="Johnson D."/>
            <person name="Rohlfing T."/>
            <person name="Nelson J."/>
            <person name="Stoneking T."/>
            <person name="Pepin K."/>
            <person name="Spieth J."/>
            <person name="Sekhon M."/>
            <person name="Armstrong J."/>
            <person name="Becker M."/>
            <person name="Belter E."/>
            <person name="Cordum H."/>
            <person name="Cordes M."/>
            <person name="Courtney L."/>
            <person name="Courtney W."/>
            <person name="Dante M."/>
            <person name="Du H."/>
            <person name="Edwards J."/>
            <person name="Fryman J."/>
            <person name="Haakensen B."/>
            <person name="Lamar E."/>
            <person name="Latreille P."/>
            <person name="Leonard S."/>
            <person name="Meyer R."/>
            <person name="Mulvaney E."/>
            <person name="Ozersky P."/>
            <person name="Riley A."/>
            <person name="Strowmatt C."/>
            <person name="Wagner-McPherson C."/>
            <person name="Wollam A."/>
            <person name="Yoakum M."/>
            <person name="Bell M."/>
            <person name="Dedhia N."/>
            <person name="Parnell L."/>
            <person name="Shah R."/>
            <person name="Rodriguez M."/>
            <person name="Hoon See L."/>
            <person name="Vil D."/>
            <person name="Baker J."/>
            <person name="Kirchoff K."/>
            <person name="Toth K."/>
            <person name="King L."/>
            <person name="Bahret A."/>
            <person name="Miller B."/>
            <person name="Marra M.A."/>
            <person name="Martienssen R."/>
            <person name="McCombie W.R."/>
            <person name="Wilson R.K."/>
            <person name="Murphy G."/>
            <person name="Bancroft I."/>
            <person name="Volckaert G."/>
            <person name="Wambutt R."/>
            <person name="Duesterhoeft A."/>
            <person name="Stiekema W."/>
            <person name="Pohl T."/>
            <person name="Entian K.-D."/>
            <person name="Terryn N."/>
            <person name="Hartley N."/>
            <person name="Bent E."/>
            <person name="Johnson S."/>
            <person name="Langham S.-A."/>
            <person name="McCullagh B."/>
            <person name="Robben J."/>
            <person name="Grymonprez B."/>
            <person name="Zimmermann W."/>
            <person name="Ramsperger U."/>
            <person name="Wedler H."/>
            <person name="Balke K."/>
            <person name="Wedler E."/>
            <person name="Peters S."/>
            <person name="van Staveren M."/>
            <person name="Dirkse W."/>
            <person name="Mooijman P."/>
            <person name="Klein Lankhorst R."/>
            <person name="Weitzenegger T."/>
            <person name="Bothe G."/>
            <person name="Rose M."/>
            <person name="Hauf J."/>
            <person name="Berneiser S."/>
            <person name="Hempel S."/>
            <person name="Feldpausch M."/>
            <person name="Lamberth S."/>
            <person name="Villarroel R."/>
            <person name="Gielen J."/>
            <person name="Ardiles W."/>
            <person name="Bents O."/>
            <person name="Lemcke K."/>
            <person name="Kolesov G."/>
            <person name="Mayer K.F.X."/>
            <person name="Rudd S."/>
            <person name="Schoof H."/>
            <person name="Schueller C."/>
            <person name="Zaccaria P."/>
            <person name="Mewes H.-W."/>
            <person name="Bevan M."/>
            <person name="Fransz P.F."/>
        </authorList>
    </citation>
    <scope>NUCLEOTIDE SEQUENCE [LARGE SCALE GENOMIC DNA]</scope>
    <source>
        <strain>cv. Columbia</strain>
    </source>
</reference>
<reference key="2">
    <citation type="journal article" date="2017" name="Plant J.">
        <title>Araport11: a complete reannotation of the Arabidopsis thaliana reference genome.</title>
        <authorList>
            <person name="Cheng C.Y."/>
            <person name="Krishnakumar V."/>
            <person name="Chan A.P."/>
            <person name="Thibaud-Nissen F."/>
            <person name="Schobel S."/>
            <person name="Town C.D."/>
        </authorList>
    </citation>
    <scope>GENOME REANNOTATION</scope>
    <source>
        <strain>cv. Columbia</strain>
    </source>
</reference>
<reference key="3">
    <citation type="journal article" date="2002" name="Science">
        <title>Functional annotation of a full-length Arabidopsis cDNA collection.</title>
        <authorList>
            <person name="Seki M."/>
            <person name="Narusaka M."/>
            <person name="Kamiya A."/>
            <person name="Ishida J."/>
            <person name="Satou M."/>
            <person name="Sakurai T."/>
            <person name="Nakajima M."/>
            <person name="Enju A."/>
            <person name="Akiyama K."/>
            <person name="Oono Y."/>
            <person name="Muramatsu M."/>
            <person name="Hayashizaki Y."/>
            <person name="Kawai J."/>
            <person name="Carninci P."/>
            <person name="Itoh M."/>
            <person name="Ishii Y."/>
            <person name="Arakawa T."/>
            <person name="Shibata K."/>
            <person name="Shinagawa A."/>
            <person name="Shinozaki K."/>
        </authorList>
    </citation>
    <scope>NUCLEOTIDE SEQUENCE [LARGE SCALE MRNA]</scope>
    <source>
        <strain>cv. Columbia</strain>
    </source>
</reference>
<reference key="4">
    <citation type="journal article" date="2003" name="Science">
        <title>Empirical analysis of transcriptional activity in the Arabidopsis genome.</title>
        <authorList>
            <person name="Yamada K."/>
            <person name="Lim J."/>
            <person name="Dale J.M."/>
            <person name="Chen H."/>
            <person name="Shinn P."/>
            <person name="Palm C.J."/>
            <person name="Southwick A.M."/>
            <person name="Wu H.C."/>
            <person name="Kim C.J."/>
            <person name="Nguyen M."/>
            <person name="Pham P.K."/>
            <person name="Cheuk R.F."/>
            <person name="Karlin-Newmann G."/>
            <person name="Liu S.X."/>
            <person name="Lam B."/>
            <person name="Sakano H."/>
            <person name="Wu T."/>
            <person name="Yu G."/>
            <person name="Miranda M."/>
            <person name="Quach H.L."/>
            <person name="Tripp M."/>
            <person name="Chang C.H."/>
            <person name="Lee J.M."/>
            <person name="Toriumi M.J."/>
            <person name="Chan M.M."/>
            <person name="Tang C.C."/>
            <person name="Onodera C.S."/>
            <person name="Deng J.M."/>
            <person name="Akiyama K."/>
            <person name="Ansari Y."/>
            <person name="Arakawa T."/>
            <person name="Banh J."/>
            <person name="Banno F."/>
            <person name="Bowser L."/>
            <person name="Brooks S.Y."/>
            <person name="Carninci P."/>
            <person name="Chao Q."/>
            <person name="Choy N."/>
            <person name="Enju A."/>
            <person name="Goldsmith A.D."/>
            <person name="Gurjal M."/>
            <person name="Hansen N.F."/>
            <person name="Hayashizaki Y."/>
            <person name="Johnson-Hopson C."/>
            <person name="Hsuan V.W."/>
            <person name="Iida K."/>
            <person name="Karnes M."/>
            <person name="Khan S."/>
            <person name="Koesema E."/>
            <person name="Ishida J."/>
            <person name="Jiang P.X."/>
            <person name="Jones T."/>
            <person name="Kawai J."/>
            <person name="Kamiya A."/>
            <person name="Meyers C."/>
            <person name="Nakajima M."/>
            <person name="Narusaka M."/>
            <person name="Seki M."/>
            <person name="Sakurai T."/>
            <person name="Satou M."/>
            <person name="Tamse R."/>
            <person name="Vaysberg M."/>
            <person name="Wallender E.K."/>
            <person name="Wong C."/>
            <person name="Yamamura Y."/>
            <person name="Yuan S."/>
            <person name="Shinozaki K."/>
            <person name="Davis R.W."/>
            <person name="Theologis A."/>
            <person name="Ecker J.R."/>
        </authorList>
    </citation>
    <scope>NUCLEOTIDE SEQUENCE [LARGE SCALE MRNA]</scope>
    <source>
        <strain>cv. Columbia</strain>
    </source>
</reference>
<accession>Q9LZF6</accession>
<sequence length="810" mass="89958">MSNEPESSDSKTKKDFSTAILERKKSPNRLVVDEAINDDNSVVSLHPTTMEKLQLFRGDTILIKGKKRKDTVCIALADETCEEPKIRMNKVVRSNLRVRLGDVISVHQCPDVKYGKRVHILPVDDTVEGVTGNLFDAYLKPYFLEAYRPVRKGDLFLVRGGMRSVEFKVIETDPAEYCVVAPDTEIFCEGEPVKREDEERLDEVGYDDVGGVRKQMAQIRELVELPLRHPQLFKSIGVKPPKGILLYGPPGSGKTLIARAVANETGAFFFCINGPEIMSKLAGESESNLRKAFEEAEKNAPSIIFIDEIDSIAPKREKTNGEVERRIVSQLLTLMDGLKSRAHVIVMGATNRPNSIDPALRRFGRFDREIDIGVPDEIGRLEVLRIHTKNMKLAEDVDLERISKDTHGYVGADLAALCTEAALQCIREKMDVIDLEDDSIDAEILNSMAVSNEHFHTALGNSNPSALRETVVEVPNVSWEDIGGLENVKRELQETVQYPVEHPEKFEKFGMSPSKGVLFYGPPGCGKTLLAKAIANECQANFISVKGPELLTMWFGESEANVREIFDKARQSAPCVLFFDELDSIATQRGNSAGDAGGAADRVLNQLLTEMDGMNAKKTVFIIGATNRPDIIDSALLRPGRLDQLIYIPLPDEDSRLNIFKACLRKSPVAKDVDVTALAKYTQGFSGADITEICQRACKYAIRENIEKDIENERRRSQNPEAMEEDMVDDEVSEIRAAHFEESMKYARRSVSDADIRKYQAFAQTLQQSRGFGSEFRFDSTAGVGRTTGVAAADPFATSAAAADDDDLYS</sequence>
<evidence type="ECO:0000250" key="1"/>
<evidence type="ECO:0000250" key="2">
    <source>
        <dbReference type="UniProtKB" id="P54609"/>
    </source>
</evidence>
<evidence type="ECO:0000255" key="3"/>
<evidence type="ECO:0000305" key="4"/>
<gene>
    <name type="primary">CDC48E</name>
    <name type="ordered locus">At5g03340</name>
    <name type="ORF">F12E4_70</name>
</gene>
<comment type="function">
    <text evidence="1">Probably functions in cell division and growth processes. Interacts with certain SNAREs as part of specialized membrane fusion events where vesicles from the same organelle fuse (homotypic fusion) (By similarity).</text>
</comment>
<comment type="subcellular location">
    <subcellularLocation>
        <location evidence="1">Nucleus</location>
    </subcellularLocation>
    <subcellularLocation>
        <location evidence="1">Cytoplasm</location>
        <location evidence="1">Cytoskeleton</location>
        <location evidence="1">Phragmoplast</location>
    </subcellularLocation>
    <text evidence="1">Primarily localized to the nucleus and, during cytokinesis, to the phragmoplast, a site where membrane vesicles are targeted in the deposition of new cell wall materials.</text>
</comment>
<comment type="similarity">
    <text evidence="4">Belongs to the AAA ATPase family.</text>
</comment>
<comment type="sequence caution" evidence="4">
    <conflict type="erroneous gene model prediction">
        <sequence resource="EMBL-CDS" id="CAB83290"/>
    </conflict>
</comment>
<proteinExistence type="evidence at transcript level"/>
<protein>
    <recommendedName>
        <fullName>Cell division control protein 48 homolog E</fullName>
        <shortName>AtCDC48e</shortName>
    </recommendedName>
    <alternativeName>
        <fullName>Transitional endoplasmic reticulum ATPase E</fullName>
    </alternativeName>
</protein>
<dbReference type="EMBL" id="AL162751">
    <property type="protein sequence ID" value="CAB83290.1"/>
    <property type="status" value="ALT_SEQ"/>
    <property type="molecule type" value="Genomic_DNA"/>
</dbReference>
<dbReference type="EMBL" id="CP002688">
    <property type="protein sequence ID" value="AED90587.1"/>
    <property type="molecule type" value="Genomic_DNA"/>
</dbReference>
<dbReference type="EMBL" id="AK117125">
    <property type="protein sequence ID" value="BAC41803.1"/>
    <property type="molecule type" value="mRNA"/>
</dbReference>
<dbReference type="EMBL" id="AK118571">
    <property type="protein sequence ID" value="BAC43171.1"/>
    <property type="molecule type" value="mRNA"/>
</dbReference>
<dbReference type="EMBL" id="BT006485">
    <property type="protein sequence ID" value="AAP21293.1"/>
    <property type="molecule type" value="mRNA"/>
</dbReference>
<dbReference type="SMR" id="Q9LZF6"/>
<dbReference type="BioGRID" id="17146">
    <property type="interactions" value="66"/>
</dbReference>
<dbReference type="FunCoup" id="Q9LZF6">
    <property type="interactions" value="3635"/>
</dbReference>
<dbReference type="IntAct" id="Q9LZF6">
    <property type="interactions" value="1"/>
</dbReference>
<dbReference type="STRING" id="3702.Q9LZF6"/>
<dbReference type="iPTMnet" id="Q9LZF6"/>
<dbReference type="PaxDb" id="3702-AT5G03340.1"/>
<dbReference type="ProteomicsDB" id="223939"/>
<dbReference type="EnsemblPlants" id="AT5G03340.1">
    <property type="protein sequence ID" value="AT5G03340.1"/>
    <property type="gene ID" value="AT5G03340"/>
</dbReference>
<dbReference type="GeneID" id="831870"/>
<dbReference type="Gramene" id="AT5G03340.1">
    <property type="protein sequence ID" value="AT5G03340.1"/>
    <property type="gene ID" value="AT5G03340"/>
</dbReference>
<dbReference type="KEGG" id="ath:AT5G03340"/>
<dbReference type="Araport" id="AT5G03340"/>
<dbReference type="TAIR" id="AT5G03340">
    <property type="gene designation" value="ATCDC48C"/>
</dbReference>
<dbReference type="eggNOG" id="KOG0730">
    <property type="taxonomic scope" value="Eukaryota"/>
</dbReference>
<dbReference type="HOGENOM" id="CLU_000688_12_3_1"/>
<dbReference type="InParanoid" id="Q9LZF6"/>
<dbReference type="OMA" id="ICQHASK"/>
<dbReference type="PhylomeDB" id="Q9LZF6"/>
<dbReference type="CD-CODE" id="4299E36E">
    <property type="entry name" value="Nucleolus"/>
</dbReference>
<dbReference type="PRO" id="PR:Q9LZF6"/>
<dbReference type="Proteomes" id="UP000006548">
    <property type="component" value="Chromosome 5"/>
</dbReference>
<dbReference type="ExpressionAtlas" id="Q9LZF6">
    <property type="expression patterns" value="baseline and differential"/>
</dbReference>
<dbReference type="GO" id="GO:0005856">
    <property type="term" value="C:cytoskeleton"/>
    <property type="evidence" value="ECO:0007669"/>
    <property type="project" value="UniProtKB-KW"/>
</dbReference>
<dbReference type="GO" id="GO:0005794">
    <property type="term" value="C:Golgi apparatus"/>
    <property type="evidence" value="ECO:0007005"/>
    <property type="project" value="TAIR"/>
</dbReference>
<dbReference type="GO" id="GO:0005634">
    <property type="term" value="C:nucleus"/>
    <property type="evidence" value="ECO:0007669"/>
    <property type="project" value="UniProtKB-SubCell"/>
</dbReference>
<dbReference type="GO" id="GO:0009524">
    <property type="term" value="C:phragmoplast"/>
    <property type="evidence" value="ECO:0007669"/>
    <property type="project" value="UniProtKB-SubCell"/>
</dbReference>
<dbReference type="GO" id="GO:0009505">
    <property type="term" value="C:plant-type cell wall"/>
    <property type="evidence" value="ECO:0007005"/>
    <property type="project" value="TAIR"/>
</dbReference>
<dbReference type="GO" id="GO:0005886">
    <property type="term" value="C:plasma membrane"/>
    <property type="evidence" value="ECO:0007005"/>
    <property type="project" value="TAIR"/>
</dbReference>
<dbReference type="GO" id="GO:0005524">
    <property type="term" value="F:ATP binding"/>
    <property type="evidence" value="ECO:0007669"/>
    <property type="project" value="UniProtKB-KW"/>
</dbReference>
<dbReference type="GO" id="GO:0016887">
    <property type="term" value="F:ATP hydrolysis activity"/>
    <property type="evidence" value="ECO:0007669"/>
    <property type="project" value="InterPro"/>
</dbReference>
<dbReference type="GO" id="GO:0051301">
    <property type="term" value="P:cell division"/>
    <property type="evidence" value="ECO:0007669"/>
    <property type="project" value="UniProtKB-KW"/>
</dbReference>
<dbReference type="GO" id="GO:0015031">
    <property type="term" value="P:protein transport"/>
    <property type="evidence" value="ECO:0007669"/>
    <property type="project" value="UniProtKB-KW"/>
</dbReference>
<dbReference type="CDD" id="cd19519">
    <property type="entry name" value="RecA-like_CDC48_r1-like"/>
    <property type="match status" value="1"/>
</dbReference>
<dbReference type="CDD" id="cd19528">
    <property type="entry name" value="RecA-like_CDC48_r2-like"/>
    <property type="match status" value="1"/>
</dbReference>
<dbReference type="FunFam" id="1.10.8.60:FF:000004">
    <property type="entry name" value="Cell division control 48"/>
    <property type="match status" value="1"/>
</dbReference>
<dbReference type="FunFam" id="3.10.330.10:FF:000001">
    <property type="entry name" value="Cell division control 48"/>
    <property type="match status" value="1"/>
</dbReference>
<dbReference type="FunFam" id="2.40.40.20:FF:000003">
    <property type="entry name" value="Transitional endoplasmic reticulum ATPase"/>
    <property type="match status" value="1"/>
</dbReference>
<dbReference type="FunFam" id="3.40.50.300:FF:000012">
    <property type="entry name" value="Transitional endoplasmic reticulum ATPase"/>
    <property type="match status" value="1"/>
</dbReference>
<dbReference type="FunFam" id="3.40.50.300:FF:000048">
    <property type="entry name" value="Transitional endoplasmic reticulum ATPase"/>
    <property type="match status" value="1"/>
</dbReference>
<dbReference type="Gene3D" id="1.10.8.60">
    <property type="match status" value="1"/>
</dbReference>
<dbReference type="Gene3D" id="2.40.40.20">
    <property type="match status" value="1"/>
</dbReference>
<dbReference type="Gene3D" id="3.10.330.10">
    <property type="match status" value="1"/>
</dbReference>
<dbReference type="Gene3D" id="6.10.20.150">
    <property type="match status" value="1"/>
</dbReference>
<dbReference type="Gene3D" id="3.40.50.300">
    <property type="entry name" value="P-loop containing nucleotide triphosphate hydrolases"/>
    <property type="match status" value="2"/>
</dbReference>
<dbReference type="InterPro" id="IPR003593">
    <property type="entry name" value="AAA+_ATPase"/>
</dbReference>
<dbReference type="InterPro" id="IPR005938">
    <property type="entry name" value="AAA_ATPase_CDC48"/>
</dbReference>
<dbReference type="InterPro" id="IPR050168">
    <property type="entry name" value="AAA_ATPase_domain"/>
</dbReference>
<dbReference type="InterPro" id="IPR041569">
    <property type="entry name" value="AAA_lid_3"/>
</dbReference>
<dbReference type="InterPro" id="IPR009010">
    <property type="entry name" value="Asp_de-COase-like_dom_sf"/>
</dbReference>
<dbReference type="InterPro" id="IPR003959">
    <property type="entry name" value="ATPase_AAA_core"/>
</dbReference>
<dbReference type="InterPro" id="IPR003960">
    <property type="entry name" value="ATPase_AAA_CS"/>
</dbReference>
<dbReference type="InterPro" id="IPR004201">
    <property type="entry name" value="Cdc48_dom2"/>
</dbReference>
<dbReference type="InterPro" id="IPR029067">
    <property type="entry name" value="CDC48_domain_2-like_sf"/>
</dbReference>
<dbReference type="InterPro" id="IPR003338">
    <property type="entry name" value="CDC4_N-term_subdom"/>
</dbReference>
<dbReference type="InterPro" id="IPR027417">
    <property type="entry name" value="P-loop_NTPase"/>
</dbReference>
<dbReference type="NCBIfam" id="TIGR01243">
    <property type="entry name" value="CDC48"/>
    <property type="match status" value="1"/>
</dbReference>
<dbReference type="PANTHER" id="PTHR23077">
    <property type="entry name" value="AAA-FAMILY ATPASE"/>
    <property type="match status" value="1"/>
</dbReference>
<dbReference type="PANTHER" id="PTHR23077:SF200">
    <property type="entry name" value="CELL DIVISION CONTROL PROTEIN 48 HOMOLOG E"/>
    <property type="match status" value="1"/>
</dbReference>
<dbReference type="Pfam" id="PF00004">
    <property type="entry name" value="AAA"/>
    <property type="match status" value="2"/>
</dbReference>
<dbReference type="Pfam" id="PF17862">
    <property type="entry name" value="AAA_lid_3"/>
    <property type="match status" value="2"/>
</dbReference>
<dbReference type="Pfam" id="PF02933">
    <property type="entry name" value="CDC48_2"/>
    <property type="match status" value="1"/>
</dbReference>
<dbReference type="Pfam" id="PF02359">
    <property type="entry name" value="CDC48_N"/>
    <property type="match status" value="1"/>
</dbReference>
<dbReference type="SMART" id="SM00382">
    <property type="entry name" value="AAA"/>
    <property type="match status" value="2"/>
</dbReference>
<dbReference type="SMART" id="SM01072">
    <property type="entry name" value="CDC48_2"/>
    <property type="match status" value="1"/>
</dbReference>
<dbReference type="SMART" id="SM01073">
    <property type="entry name" value="CDC48_N"/>
    <property type="match status" value="1"/>
</dbReference>
<dbReference type="SUPFAM" id="SSF50692">
    <property type="entry name" value="ADC-like"/>
    <property type="match status" value="1"/>
</dbReference>
<dbReference type="SUPFAM" id="SSF54585">
    <property type="entry name" value="Cdc48 domain 2-like"/>
    <property type="match status" value="1"/>
</dbReference>
<dbReference type="SUPFAM" id="SSF52540">
    <property type="entry name" value="P-loop containing nucleoside triphosphate hydrolases"/>
    <property type="match status" value="2"/>
</dbReference>
<dbReference type="PROSITE" id="PS00674">
    <property type="entry name" value="AAA"/>
    <property type="match status" value="2"/>
</dbReference>